<reference key="1">
    <citation type="journal article" date="2011" name="Appl. Environ. Microbiol.">
        <title>Genomic potential of Marinobacter aquaeolei, a biogeochemical 'opportunitroph'.</title>
        <authorList>
            <person name="Singer E."/>
            <person name="Webb E.A."/>
            <person name="Nelson W.C."/>
            <person name="Heidelberg J.F."/>
            <person name="Ivanova N."/>
            <person name="Pati A."/>
            <person name="Edwards K.J."/>
        </authorList>
    </citation>
    <scope>NUCLEOTIDE SEQUENCE [LARGE SCALE GENOMIC DNA]</scope>
    <source>
        <strain>ATCC 700491 / DSM 11845 / VT8</strain>
    </source>
</reference>
<organism>
    <name type="scientific">Marinobacter nauticus (strain ATCC 700491 / DSM 11845 / VT8)</name>
    <name type="common">Marinobacter aquaeolei</name>
    <dbReference type="NCBI Taxonomy" id="351348"/>
    <lineage>
        <taxon>Bacteria</taxon>
        <taxon>Pseudomonadati</taxon>
        <taxon>Pseudomonadota</taxon>
        <taxon>Gammaproteobacteria</taxon>
        <taxon>Pseudomonadales</taxon>
        <taxon>Marinobacteraceae</taxon>
        <taxon>Marinobacter</taxon>
    </lineage>
</organism>
<protein>
    <recommendedName>
        <fullName evidence="1">DNA-directed RNA polymerase subunit omega</fullName>
        <shortName evidence="1">RNAP omega subunit</shortName>
        <ecNumber evidence="1">2.7.7.6</ecNumber>
    </recommendedName>
    <alternativeName>
        <fullName evidence="1">RNA polymerase omega subunit</fullName>
    </alternativeName>
    <alternativeName>
        <fullName evidence="1">Transcriptase subunit omega</fullName>
    </alternativeName>
</protein>
<proteinExistence type="inferred from homology"/>
<dbReference type="EC" id="2.7.7.6" evidence="1"/>
<dbReference type="EMBL" id="CP000514">
    <property type="protein sequence ID" value="ABM17733.1"/>
    <property type="molecule type" value="Genomic_DNA"/>
</dbReference>
<dbReference type="RefSeq" id="WP_011784168.1">
    <property type="nucleotide sequence ID" value="NC_008740.1"/>
</dbReference>
<dbReference type="SMR" id="A1TYB4"/>
<dbReference type="STRING" id="351348.Maqu_0635"/>
<dbReference type="GeneID" id="31819991"/>
<dbReference type="KEGG" id="maq:Maqu_0635"/>
<dbReference type="eggNOG" id="COG1758">
    <property type="taxonomic scope" value="Bacteria"/>
</dbReference>
<dbReference type="HOGENOM" id="CLU_125406_5_2_6"/>
<dbReference type="OrthoDB" id="9796300at2"/>
<dbReference type="Proteomes" id="UP000000998">
    <property type="component" value="Chromosome"/>
</dbReference>
<dbReference type="GO" id="GO:0000428">
    <property type="term" value="C:DNA-directed RNA polymerase complex"/>
    <property type="evidence" value="ECO:0007669"/>
    <property type="project" value="UniProtKB-KW"/>
</dbReference>
<dbReference type="GO" id="GO:0003677">
    <property type="term" value="F:DNA binding"/>
    <property type="evidence" value="ECO:0007669"/>
    <property type="project" value="UniProtKB-UniRule"/>
</dbReference>
<dbReference type="GO" id="GO:0003899">
    <property type="term" value="F:DNA-directed RNA polymerase activity"/>
    <property type="evidence" value="ECO:0007669"/>
    <property type="project" value="UniProtKB-UniRule"/>
</dbReference>
<dbReference type="GO" id="GO:0006351">
    <property type="term" value="P:DNA-templated transcription"/>
    <property type="evidence" value="ECO:0007669"/>
    <property type="project" value="UniProtKB-UniRule"/>
</dbReference>
<dbReference type="Gene3D" id="3.90.940.10">
    <property type="match status" value="1"/>
</dbReference>
<dbReference type="HAMAP" id="MF_00366">
    <property type="entry name" value="RNApol_bact_RpoZ"/>
    <property type="match status" value="1"/>
</dbReference>
<dbReference type="InterPro" id="IPR003716">
    <property type="entry name" value="DNA-dir_RNA_pol_omega"/>
</dbReference>
<dbReference type="InterPro" id="IPR006110">
    <property type="entry name" value="Pol_omega/Rpo6/RPB6"/>
</dbReference>
<dbReference type="InterPro" id="IPR036161">
    <property type="entry name" value="RPB6/omega-like_sf"/>
</dbReference>
<dbReference type="NCBIfam" id="TIGR00690">
    <property type="entry name" value="rpoZ"/>
    <property type="match status" value="1"/>
</dbReference>
<dbReference type="PANTHER" id="PTHR34476">
    <property type="entry name" value="DNA-DIRECTED RNA POLYMERASE SUBUNIT OMEGA"/>
    <property type="match status" value="1"/>
</dbReference>
<dbReference type="PANTHER" id="PTHR34476:SF1">
    <property type="entry name" value="DNA-DIRECTED RNA POLYMERASE SUBUNIT OMEGA"/>
    <property type="match status" value="1"/>
</dbReference>
<dbReference type="Pfam" id="PF01192">
    <property type="entry name" value="RNA_pol_Rpb6"/>
    <property type="match status" value="1"/>
</dbReference>
<dbReference type="SMART" id="SM01409">
    <property type="entry name" value="RNA_pol_Rpb6"/>
    <property type="match status" value="1"/>
</dbReference>
<dbReference type="SUPFAM" id="SSF63562">
    <property type="entry name" value="RPB6/omega subunit-like"/>
    <property type="match status" value="1"/>
</dbReference>
<accession>A1TYB4</accession>
<keyword id="KW-0240">DNA-directed RNA polymerase</keyword>
<keyword id="KW-0548">Nucleotidyltransferase</keyword>
<keyword id="KW-0804">Transcription</keyword>
<keyword id="KW-0808">Transferase</keyword>
<sequence>MARVTVEDCLENVDNRFQLVMLATKRARQIATKGAEPMVAEENDKPTVIALREIAEGKVTRDLLLEEDDD</sequence>
<evidence type="ECO:0000255" key="1">
    <source>
        <dbReference type="HAMAP-Rule" id="MF_00366"/>
    </source>
</evidence>
<name>RPOZ_MARN8</name>
<gene>
    <name evidence="1" type="primary">rpoZ</name>
    <name type="ordered locus">Maqu_0635</name>
</gene>
<feature type="chain" id="PRO_1000005953" description="DNA-directed RNA polymerase subunit omega">
    <location>
        <begin position="1"/>
        <end position="70"/>
    </location>
</feature>
<comment type="function">
    <text evidence="1">Promotes RNA polymerase assembly. Latches the N- and C-terminal regions of the beta' subunit thereby facilitating its interaction with the beta and alpha subunits.</text>
</comment>
<comment type="catalytic activity">
    <reaction evidence="1">
        <text>RNA(n) + a ribonucleoside 5'-triphosphate = RNA(n+1) + diphosphate</text>
        <dbReference type="Rhea" id="RHEA:21248"/>
        <dbReference type="Rhea" id="RHEA-COMP:14527"/>
        <dbReference type="Rhea" id="RHEA-COMP:17342"/>
        <dbReference type="ChEBI" id="CHEBI:33019"/>
        <dbReference type="ChEBI" id="CHEBI:61557"/>
        <dbReference type="ChEBI" id="CHEBI:140395"/>
        <dbReference type="EC" id="2.7.7.6"/>
    </reaction>
</comment>
<comment type="subunit">
    <text evidence="1">The RNAP catalytic core consists of 2 alpha, 1 beta, 1 beta' and 1 omega subunit. When a sigma factor is associated with the core the holoenzyme is formed, which can initiate transcription.</text>
</comment>
<comment type="similarity">
    <text evidence="1">Belongs to the RNA polymerase subunit omega family.</text>
</comment>